<accession>Q31DJ4</accession>
<reference key="1">
    <citation type="journal article" date="2006" name="PLoS Biol.">
        <title>The genome of deep-sea vent chemolithoautotroph Thiomicrospira crunogena XCL-2.</title>
        <authorList>
            <person name="Scott K.M."/>
            <person name="Sievert S.M."/>
            <person name="Abril F.N."/>
            <person name="Ball L.A."/>
            <person name="Barrett C.J."/>
            <person name="Blake R.A."/>
            <person name="Boller A.J."/>
            <person name="Chain P.S.G."/>
            <person name="Clark J.A."/>
            <person name="Davis C.R."/>
            <person name="Detter C."/>
            <person name="Do K.F."/>
            <person name="Dobrinski K.P."/>
            <person name="Faza B.I."/>
            <person name="Fitzpatrick K.A."/>
            <person name="Freyermuth S.K."/>
            <person name="Harmer T.L."/>
            <person name="Hauser L.J."/>
            <person name="Huegler M."/>
            <person name="Kerfeld C.A."/>
            <person name="Klotz M.G."/>
            <person name="Kong W.W."/>
            <person name="Land M."/>
            <person name="Lapidus A."/>
            <person name="Larimer F.W."/>
            <person name="Longo D.L."/>
            <person name="Lucas S."/>
            <person name="Malfatti S.A."/>
            <person name="Massey S.E."/>
            <person name="Martin D.D."/>
            <person name="McCuddin Z."/>
            <person name="Meyer F."/>
            <person name="Moore J.L."/>
            <person name="Ocampo L.H. Jr."/>
            <person name="Paul J.H."/>
            <person name="Paulsen I.T."/>
            <person name="Reep D.K."/>
            <person name="Ren Q."/>
            <person name="Ross R.L."/>
            <person name="Sato P.Y."/>
            <person name="Thomas P."/>
            <person name="Tinkham L.E."/>
            <person name="Zeruth G.T."/>
        </authorList>
    </citation>
    <scope>NUCLEOTIDE SEQUENCE [LARGE SCALE GENOMIC DNA]</scope>
    <source>
        <strain>DSM 25203 / XCL-2</strain>
    </source>
</reference>
<comment type="function">
    <text evidence="1">Catalyzes the NADPH-dependent reduction of 7-cyano-7-deazaguanine (preQ0) to 7-aminomethyl-7-deazaguanine (preQ1).</text>
</comment>
<comment type="catalytic activity">
    <reaction evidence="1">
        <text>7-aminomethyl-7-carbaguanine + 2 NADP(+) = 7-cyano-7-deazaguanine + 2 NADPH + 3 H(+)</text>
        <dbReference type="Rhea" id="RHEA:13409"/>
        <dbReference type="ChEBI" id="CHEBI:15378"/>
        <dbReference type="ChEBI" id="CHEBI:45075"/>
        <dbReference type="ChEBI" id="CHEBI:57783"/>
        <dbReference type="ChEBI" id="CHEBI:58349"/>
        <dbReference type="ChEBI" id="CHEBI:58703"/>
        <dbReference type="EC" id="1.7.1.13"/>
    </reaction>
</comment>
<comment type="pathway">
    <text evidence="1">tRNA modification; tRNA-queuosine biosynthesis.</text>
</comment>
<comment type="subunit">
    <text evidence="1">Homodimer.</text>
</comment>
<comment type="subcellular location">
    <subcellularLocation>
        <location evidence="1">Cytoplasm</location>
    </subcellularLocation>
</comment>
<comment type="similarity">
    <text evidence="1">Belongs to the GTP cyclohydrolase I family. QueF type 2 subfamily.</text>
</comment>
<keyword id="KW-0963">Cytoplasm</keyword>
<keyword id="KW-0521">NADP</keyword>
<keyword id="KW-0560">Oxidoreductase</keyword>
<keyword id="KW-0671">Queuosine biosynthesis</keyword>
<protein>
    <recommendedName>
        <fullName evidence="1">NADPH-dependent 7-cyano-7-deazaguanine reductase</fullName>
        <ecNumber evidence="1">1.7.1.13</ecNumber>
    </recommendedName>
    <alternativeName>
        <fullName evidence="1">7-cyano-7-carbaguanine reductase</fullName>
    </alternativeName>
    <alternativeName>
        <fullName evidence="1">NADPH-dependent nitrile oxidoreductase</fullName>
    </alternativeName>
    <alternativeName>
        <fullName evidence="1">PreQ(0) reductase</fullName>
    </alternativeName>
</protein>
<gene>
    <name evidence="1" type="primary">queF</name>
    <name type="ordered locus">Tcr_2191</name>
</gene>
<name>QUEF_HYDCU</name>
<sequence>MTKPTSTADKSLLGQTTPYCQAYDPTILFPIPRQEKRDELGFDLKTLPFTGEDVWTGYEISWLNLKGKPQVGWAEFVFSAEAPNLIESKSFKLYLNSFNGTRFESEDAVIACWQNDLSQACGKPVGVRFYRLDESIVLQGNLPGHCLDALDIEVEDYQVNPDLLHTDSDQIVSETLNSHLLKSNCLVTGQPDWGSIVVRYEGAQINHEALLKYLISFREHNEFHEQCVERVFTDIMRFCQPKKLTVYARYLRRGGLDINPYRSNYEQVFDRARLVRQ</sequence>
<evidence type="ECO:0000255" key="1">
    <source>
        <dbReference type="HAMAP-Rule" id="MF_00817"/>
    </source>
</evidence>
<proteinExistence type="inferred from homology"/>
<dbReference type="EC" id="1.7.1.13" evidence="1"/>
<dbReference type="EMBL" id="CP000109">
    <property type="protein sequence ID" value="ABB42779.1"/>
    <property type="molecule type" value="Genomic_DNA"/>
</dbReference>
<dbReference type="SMR" id="Q31DJ4"/>
<dbReference type="STRING" id="317025.Tcr_2191"/>
<dbReference type="KEGG" id="tcx:Tcr_2191"/>
<dbReference type="eggNOG" id="COG0780">
    <property type="taxonomic scope" value="Bacteria"/>
</dbReference>
<dbReference type="eggNOG" id="COG2904">
    <property type="taxonomic scope" value="Bacteria"/>
</dbReference>
<dbReference type="HOGENOM" id="CLU_054738_0_0_6"/>
<dbReference type="OrthoDB" id="9789995at2"/>
<dbReference type="UniPathway" id="UPA00392"/>
<dbReference type="GO" id="GO:0005737">
    <property type="term" value="C:cytoplasm"/>
    <property type="evidence" value="ECO:0007669"/>
    <property type="project" value="UniProtKB-SubCell"/>
</dbReference>
<dbReference type="GO" id="GO:0033739">
    <property type="term" value="F:preQ1 synthase activity"/>
    <property type="evidence" value="ECO:0007669"/>
    <property type="project" value="UniProtKB-UniRule"/>
</dbReference>
<dbReference type="GO" id="GO:0008616">
    <property type="term" value="P:queuosine biosynthetic process"/>
    <property type="evidence" value="ECO:0007669"/>
    <property type="project" value="UniProtKB-UniRule"/>
</dbReference>
<dbReference type="GO" id="GO:0006400">
    <property type="term" value="P:tRNA modification"/>
    <property type="evidence" value="ECO:0007669"/>
    <property type="project" value="UniProtKB-UniRule"/>
</dbReference>
<dbReference type="Gene3D" id="3.30.1130.10">
    <property type="match status" value="2"/>
</dbReference>
<dbReference type="HAMAP" id="MF_00817">
    <property type="entry name" value="QueF_type2"/>
    <property type="match status" value="1"/>
</dbReference>
<dbReference type="InterPro" id="IPR043133">
    <property type="entry name" value="GTP-CH-I_C/QueF"/>
</dbReference>
<dbReference type="InterPro" id="IPR050084">
    <property type="entry name" value="NADPH_dep_7-cyano-7-deazaG_red"/>
</dbReference>
<dbReference type="InterPro" id="IPR029500">
    <property type="entry name" value="QueF"/>
</dbReference>
<dbReference type="InterPro" id="IPR029139">
    <property type="entry name" value="QueF_N"/>
</dbReference>
<dbReference type="InterPro" id="IPR016428">
    <property type="entry name" value="QueF_type2"/>
</dbReference>
<dbReference type="NCBIfam" id="TIGR03138">
    <property type="entry name" value="QueF"/>
    <property type="match status" value="1"/>
</dbReference>
<dbReference type="PANTHER" id="PTHR34354">
    <property type="entry name" value="NADPH-DEPENDENT 7-CYANO-7-DEAZAGUANINE REDUCTASE"/>
    <property type="match status" value="1"/>
</dbReference>
<dbReference type="PANTHER" id="PTHR34354:SF1">
    <property type="entry name" value="NADPH-DEPENDENT 7-CYANO-7-DEAZAGUANINE REDUCTASE"/>
    <property type="match status" value="1"/>
</dbReference>
<dbReference type="Pfam" id="PF14489">
    <property type="entry name" value="QueF"/>
    <property type="match status" value="1"/>
</dbReference>
<dbReference type="Pfam" id="PF14819">
    <property type="entry name" value="QueF_N"/>
    <property type="match status" value="1"/>
</dbReference>
<dbReference type="PIRSF" id="PIRSF004750">
    <property type="entry name" value="Nitrile_oxidored_YqcD_prd"/>
    <property type="match status" value="1"/>
</dbReference>
<dbReference type="SUPFAM" id="SSF55620">
    <property type="entry name" value="Tetrahydrobiopterin biosynthesis enzymes-like"/>
    <property type="match status" value="1"/>
</dbReference>
<feature type="chain" id="PRO_0000247723" description="NADPH-dependent 7-cyano-7-deazaguanine reductase">
    <location>
        <begin position="1"/>
        <end position="277"/>
    </location>
</feature>
<feature type="active site" description="Thioimide intermediate" evidence="1">
    <location>
        <position position="185"/>
    </location>
</feature>
<feature type="active site" description="Proton donor" evidence="1">
    <location>
        <position position="192"/>
    </location>
</feature>
<feature type="binding site" evidence="1">
    <location>
        <begin position="86"/>
        <end position="88"/>
    </location>
    <ligand>
        <name>substrate</name>
    </ligand>
</feature>
<feature type="binding site" evidence="1">
    <location>
        <begin position="88"/>
        <end position="89"/>
    </location>
    <ligand>
        <name>NADPH</name>
        <dbReference type="ChEBI" id="CHEBI:57783"/>
    </ligand>
</feature>
<feature type="binding site" evidence="1">
    <location>
        <begin position="224"/>
        <end position="225"/>
    </location>
    <ligand>
        <name>substrate</name>
    </ligand>
</feature>
<feature type="binding site" evidence="1">
    <location>
        <begin position="253"/>
        <end position="254"/>
    </location>
    <ligand>
        <name>NADPH</name>
        <dbReference type="ChEBI" id="CHEBI:57783"/>
    </ligand>
</feature>
<organism>
    <name type="scientific">Hydrogenovibrio crunogenus (strain DSM 25203 / XCL-2)</name>
    <name type="common">Thiomicrospira crunogena</name>
    <dbReference type="NCBI Taxonomy" id="317025"/>
    <lineage>
        <taxon>Bacteria</taxon>
        <taxon>Pseudomonadati</taxon>
        <taxon>Pseudomonadota</taxon>
        <taxon>Gammaproteobacteria</taxon>
        <taxon>Thiotrichales</taxon>
        <taxon>Piscirickettsiaceae</taxon>
        <taxon>Hydrogenovibrio</taxon>
    </lineage>
</organism>